<protein>
    <recommendedName>
        <fullName>Mitochondrial inner membrane i-AAA protease complex subunit MGR1</fullName>
    </recommendedName>
</protein>
<keyword id="KW-0472">Membrane</keyword>
<keyword id="KW-0496">Mitochondrion</keyword>
<keyword id="KW-0999">Mitochondrion inner membrane</keyword>
<keyword id="KW-1185">Reference proteome</keyword>
<keyword id="KW-0812">Transmembrane</keyword>
<keyword id="KW-1133">Transmembrane helix</keyword>
<gene>
    <name type="primary">MGR1</name>
    <name type="ordered locus">AFR719W</name>
</gene>
<organism>
    <name type="scientific">Eremothecium gossypii (strain ATCC 10895 / CBS 109.51 / FGSC 9923 / NRRL Y-1056)</name>
    <name type="common">Yeast</name>
    <name type="synonym">Ashbya gossypii</name>
    <dbReference type="NCBI Taxonomy" id="284811"/>
    <lineage>
        <taxon>Eukaryota</taxon>
        <taxon>Fungi</taxon>
        <taxon>Dikarya</taxon>
        <taxon>Ascomycota</taxon>
        <taxon>Saccharomycotina</taxon>
        <taxon>Saccharomycetes</taxon>
        <taxon>Saccharomycetales</taxon>
        <taxon>Saccharomycetaceae</taxon>
        <taxon>Eremothecium</taxon>
    </lineage>
</organism>
<comment type="function">
    <text evidence="1">Component of the mitochondrial inner membrane i-AAA protease complex required for mitochondrial inner membrane protein turnover.</text>
</comment>
<comment type="subunit">
    <text evidence="1">Component of the mitochondrial inner membrane i-AAA protease complex.</text>
</comment>
<comment type="subcellular location">
    <subcellularLocation>
        <location evidence="1">Mitochondrion inner membrane</location>
        <topology evidence="1">Multi-pass membrane protein</topology>
    </subcellularLocation>
</comment>
<comment type="similarity">
    <text evidence="4">Belongs to the MGR1 family.</text>
</comment>
<evidence type="ECO:0000250" key="1"/>
<evidence type="ECO:0000255" key="2"/>
<evidence type="ECO:0000256" key="3">
    <source>
        <dbReference type="SAM" id="MobiDB-lite"/>
    </source>
</evidence>
<evidence type="ECO:0000305" key="4"/>
<proteinExistence type="inferred from homology"/>
<reference key="1">
    <citation type="journal article" date="2004" name="Science">
        <title>The Ashbya gossypii genome as a tool for mapping the ancient Saccharomyces cerevisiae genome.</title>
        <authorList>
            <person name="Dietrich F.S."/>
            <person name="Voegeli S."/>
            <person name="Brachat S."/>
            <person name="Lerch A."/>
            <person name="Gates K."/>
            <person name="Steiner S."/>
            <person name="Mohr C."/>
            <person name="Poehlmann R."/>
            <person name="Luedi P."/>
            <person name="Choi S."/>
            <person name="Wing R.A."/>
            <person name="Flavier A."/>
            <person name="Gaffney T.D."/>
            <person name="Philippsen P."/>
        </authorList>
    </citation>
    <scope>NUCLEOTIDE SEQUENCE [LARGE SCALE GENOMIC DNA]</scope>
    <source>
        <strain>ATCC 10895 / CBS 109.51 / FGSC 9923 / NRRL Y-1056</strain>
    </source>
</reference>
<reference key="2">
    <citation type="journal article" date="2013" name="G3 (Bethesda)">
        <title>Genomes of Ashbya fungi isolated from insects reveal four mating-type loci, numerous translocations, lack of transposons, and distinct gene duplications.</title>
        <authorList>
            <person name="Dietrich F.S."/>
            <person name="Voegeli S."/>
            <person name="Kuo S."/>
            <person name="Philippsen P."/>
        </authorList>
    </citation>
    <scope>GENOME REANNOTATION</scope>
    <source>
        <strain>ATCC 10895 / CBS 109.51 / FGSC 9923 / NRRL Y-1056</strain>
    </source>
</reference>
<dbReference type="EMBL" id="AE016819">
    <property type="protein sequence ID" value="AAS54091.1"/>
    <property type="molecule type" value="Genomic_DNA"/>
</dbReference>
<dbReference type="RefSeq" id="NP_986267.1">
    <property type="nucleotide sequence ID" value="NM_212403.1"/>
</dbReference>
<dbReference type="FunCoup" id="Q751V6">
    <property type="interactions" value="52"/>
</dbReference>
<dbReference type="STRING" id="284811.Q751V6"/>
<dbReference type="EnsemblFungi" id="AAS54091">
    <property type="protein sequence ID" value="AAS54091"/>
    <property type="gene ID" value="AGOS_AFR719W"/>
</dbReference>
<dbReference type="GeneID" id="4622556"/>
<dbReference type="KEGG" id="ago:AGOS_AFR719W"/>
<dbReference type="eggNOG" id="ENOG502QR67">
    <property type="taxonomic scope" value="Eukaryota"/>
</dbReference>
<dbReference type="HOGENOM" id="CLU_039216_0_0_1"/>
<dbReference type="InParanoid" id="Q751V6"/>
<dbReference type="OMA" id="FYHEGID"/>
<dbReference type="OrthoDB" id="4087899at2759"/>
<dbReference type="Proteomes" id="UP000000591">
    <property type="component" value="Chromosome VI"/>
</dbReference>
<dbReference type="GO" id="GO:0031942">
    <property type="term" value="C:i-AAA complex"/>
    <property type="evidence" value="ECO:0007669"/>
    <property type="project" value="EnsemblFungi"/>
</dbReference>
<dbReference type="GO" id="GO:0051787">
    <property type="term" value="F:misfolded protein binding"/>
    <property type="evidence" value="ECO:0007669"/>
    <property type="project" value="EnsemblFungi"/>
</dbReference>
<dbReference type="GO" id="GO:0006515">
    <property type="term" value="P:protein quality control for misfolded or incompletely synthesized proteins"/>
    <property type="evidence" value="ECO:0007669"/>
    <property type="project" value="EnsemblFungi"/>
</dbReference>
<dbReference type="InterPro" id="IPR013911">
    <property type="entry name" value="i-AAA_Mgr1"/>
</dbReference>
<dbReference type="Pfam" id="PF08602">
    <property type="entry name" value="Mgr1"/>
    <property type="match status" value="1"/>
</dbReference>
<sequence>MALFTPPSEDKDGRDRSGGGDKASGVVRTPFHLRPSLGLALWGPLVPASDNRAGLWTLVGLQTLMGAFFVSRFRALRPKLLKRDIADFPSLNRFSKTSGDMHVGPVHVFADFGGTHSFHRRAGESPGFFQSRRFVSLKRALYLSTGVVLLVQSALESARLTLLVYDPWEEQARGVRDKQFYNDVVRYYHEGVDPARFIVKDPASGNTLPVNVPEVKQGVALARAHTNARNIITRWLGPLDCKPLSSSEFLDKLEHYLDTCDFIQDMNNKRLFGNPAEVKARQKALDALIQANKENRRRIRHILDITPPRGLPLSPKAVDQGLRSIILDPDHESTEDLDLHELWSIYNPWVDLALDTSLSIKFLPTVRTPEELLGDSEDTAVEQKNPPVQIKRERG</sequence>
<name>MGR1_EREGS</name>
<feature type="chain" id="PRO_0000324409" description="Mitochondrial inner membrane i-AAA protease complex subunit MGR1">
    <location>
        <begin position="1"/>
        <end position="395"/>
    </location>
</feature>
<feature type="topological domain" description="Mitochondrial intermembrane" evidence="1">
    <location>
        <begin position="1"/>
        <end position="52"/>
    </location>
</feature>
<feature type="transmembrane region" description="Helical" evidence="2">
    <location>
        <begin position="53"/>
        <end position="70"/>
    </location>
</feature>
<feature type="topological domain" description="Mitochondrial matrix" evidence="1">
    <location>
        <begin position="71"/>
        <end position="139"/>
    </location>
</feature>
<feature type="transmembrane region" description="Helical" evidence="2">
    <location>
        <begin position="140"/>
        <end position="156"/>
    </location>
</feature>
<feature type="topological domain" description="Mitochondrial intermembrane" evidence="1">
    <location>
        <begin position="157"/>
        <end position="395"/>
    </location>
</feature>
<feature type="region of interest" description="Disordered" evidence="3">
    <location>
        <begin position="1"/>
        <end position="27"/>
    </location>
</feature>
<feature type="region of interest" description="Disordered" evidence="3">
    <location>
        <begin position="372"/>
        <end position="395"/>
    </location>
</feature>
<feature type="compositionally biased region" description="Basic and acidic residues" evidence="3">
    <location>
        <begin position="8"/>
        <end position="19"/>
    </location>
</feature>
<accession>Q751V6</accession>